<comment type="function">
    <text evidence="1">Catalyzes the condensation of pantoate with beta-alanine in an ATP-dependent reaction via a pantoyl-adenylate intermediate.</text>
</comment>
<comment type="catalytic activity">
    <reaction evidence="1">
        <text>(R)-pantoate + beta-alanine + ATP = (R)-pantothenate + AMP + diphosphate + H(+)</text>
        <dbReference type="Rhea" id="RHEA:10912"/>
        <dbReference type="ChEBI" id="CHEBI:15378"/>
        <dbReference type="ChEBI" id="CHEBI:15980"/>
        <dbReference type="ChEBI" id="CHEBI:29032"/>
        <dbReference type="ChEBI" id="CHEBI:30616"/>
        <dbReference type="ChEBI" id="CHEBI:33019"/>
        <dbReference type="ChEBI" id="CHEBI:57966"/>
        <dbReference type="ChEBI" id="CHEBI:456215"/>
        <dbReference type="EC" id="6.3.2.1"/>
    </reaction>
</comment>
<comment type="pathway">
    <text evidence="1">Cofactor biosynthesis; (R)-pantothenate biosynthesis; (R)-pantothenate from (R)-pantoate and beta-alanine: step 1/1.</text>
</comment>
<comment type="subunit">
    <text evidence="1">Homodimer.</text>
</comment>
<comment type="subcellular location">
    <subcellularLocation>
        <location evidence="1">Cytoplasm</location>
    </subcellularLocation>
</comment>
<comment type="miscellaneous">
    <text evidence="1">The reaction proceeds by a bi uni uni bi ping pong mechanism.</text>
</comment>
<comment type="similarity">
    <text evidence="1">Belongs to the pantothenate synthetase family.</text>
</comment>
<keyword id="KW-0067">ATP-binding</keyword>
<keyword id="KW-0963">Cytoplasm</keyword>
<keyword id="KW-0436">Ligase</keyword>
<keyword id="KW-0547">Nucleotide-binding</keyword>
<keyword id="KW-0566">Pantothenate biosynthesis</keyword>
<keyword id="KW-1185">Reference proteome</keyword>
<accession>A9BV01</accession>
<evidence type="ECO:0000255" key="1">
    <source>
        <dbReference type="HAMAP-Rule" id="MF_00158"/>
    </source>
</evidence>
<name>PANC_DELAS</name>
<dbReference type="EC" id="6.3.2.1" evidence="1"/>
<dbReference type="EMBL" id="CP000884">
    <property type="protein sequence ID" value="ABX34463.1"/>
    <property type="molecule type" value="Genomic_DNA"/>
</dbReference>
<dbReference type="RefSeq" id="WP_012203748.1">
    <property type="nucleotide sequence ID" value="NC_010002.1"/>
</dbReference>
<dbReference type="SMR" id="A9BV01"/>
<dbReference type="STRING" id="398578.Daci_1821"/>
<dbReference type="GeneID" id="24118448"/>
<dbReference type="KEGG" id="dac:Daci_1821"/>
<dbReference type="eggNOG" id="COG0414">
    <property type="taxonomic scope" value="Bacteria"/>
</dbReference>
<dbReference type="HOGENOM" id="CLU_047148_0_0_4"/>
<dbReference type="UniPathway" id="UPA00028">
    <property type="reaction ID" value="UER00005"/>
</dbReference>
<dbReference type="Proteomes" id="UP000000784">
    <property type="component" value="Chromosome"/>
</dbReference>
<dbReference type="GO" id="GO:0005829">
    <property type="term" value="C:cytosol"/>
    <property type="evidence" value="ECO:0007669"/>
    <property type="project" value="TreeGrafter"/>
</dbReference>
<dbReference type="GO" id="GO:0005524">
    <property type="term" value="F:ATP binding"/>
    <property type="evidence" value="ECO:0007669"/>
    <property type="project" value="UniProtKB-KW"/>
</dbReference>
<dbReference type="GO" id="GO:0004592">
    <property type="term" value="F:pantoate-beta-alanine ligase activity"/>
    <property type="evidence" value="ECO:0007669"/>
    <property type="project" value="UniProtKB-UniRule"/>
</dbReference>
<dbReference type="GO" id="GO:0015940">
    <property type="term" value="P:pantothenate biosynthetic process"/>
    <property type="evidence" value="ECO:0007669"/>
    <property type="project" value="UniProtKB-UniRule"/>
</dbReference>
<dbReference type="CDD" id="cd00560">
    <property type="entry name" value="PanC"/>
    <property type="match status" value="1"/>
</dbReference>
<dbReference type="Gene3D" id="3.40.50.620">
    <property type="entry name" value="HUPs"/>
    <property type="match status" value="1"/>
</dbReference>
<dbReference type="Gene3D" id="3.30.1300.10">
    <property type="entry name" value="Pantoate-beta-alanine ligase, C-terminal domain"/>
    <property type="match status" value="1"/>
</dbReference>
<dbReference type="HAMAP" id="MF_00158">
    <property type="entry name" value="PanC"/>
    <property type="match status" value="1"/>
</dbReference>
<dbReference type="InterPro" id="IPR003721">
    <property type="entry name" value="Pantoate_ligase"/>
</dbReference>
<dbReference type="InterPro" id="IPR042176">
    <property type="entry name" value="Pantoate_ligase_C"/>
</dbReference>
<dbReference type="InterPro" id="IPR014729">
    <property type="entry name" value="Rossmann-like_a/b/a_fold"/>
</dbReference>
<dbReference type="NCBIfam" id="TIGR00018">
    <property type="entry name" value="panC"/>
    <property type="match status" value="1"/>
</dbReference>
<dbReference type="PANTHER" id="PTHR21299">
    <property type="entry name" value="CYTIDYLATE KINASE/PANTOATE-BETA-ALANINE LIGASE"/>
    <property type="match status" value="1"/>
</dbReference>
<dbReference type="PANTHER" id="PTHR21299:SF1">
    <property type="entry name" value="PANTOATE--BETA-ALANINE LIGASE"/>
    <property type="match status" value="1"/>
</dbReference>
<dbReference type="Pfam" id="PF02569">
    <property type="entry name" value="Pantoate_ligase"/>
    <property type="match status" value="1"/>
</dbReference>
<dbReference type="SUPFAM" id="SSF52374">
    <property type="entry name" value="Nucleotidylyl transferase"/>
    <property type="match status" value="1"/>
</dbReference>
<sequence length="283" mass="30862">MQIVHSIADLRAILSSKGRPAFVPTMGNLHDGHLSLVRAARQHGDIAVASIFVNRLQFLPHEDFDSYPRTWEADCAKLEAEGCDLLFAPREADLYPEPQTFKIQPDAQLADILEGHFRPGFFTGVCTVVMKLFSAVFFASGGGTAVFGKKDYQQLMVIRRMVEQFALPVNIVAGDTARADDGLALSSRNGYLSDDERQQAMALSLALKQLADAARAGQAPLAELEAWAMQSLAAQGWEPDYLTVRLRRDLQPPAEGAQLAGAPLVALGAARLGKTRLIDNLEF</sequence>
<organism>
    <name type="scientific">Delftia acidovorans (strain DSM 14801 / SPH-1)</name>
    <dbReference type="NCBI Taxonomy" id="398578"/>
    <lineage>
        <taxon>Bacteria</taxon>
        <taxon>Pseudomonadati</taxon>
        <taxon>Pseudomonadota</taxon>
        <taxon>Betaproteobacteria</taxon>
        <taxon>Burkholderiales</taxon>
        <taxon>Comamonadaceae</taxon>
        <taxon>Delftia</taxon>
    </lineage>
</organism>
<protein>
    <recommendedName>
        <fullName evidence="1">Pantothenate synthetase</fullName>
        <shortName evidence="1">PS</shortName>
        <ecNumber evidence="1">6.3.2.1</ecNumber>
    </recommendedName>
    <alternativeName>
        <fullName evidence="1">Pantoate--beta-alanine ligase</fullName>
    </alternativeName>
    <alternativeName>
        <fullName evidence="1">Pantoate-activating enzyme</fullName>
    </alternativeName>
</protein>
<feature type="chain" id="PRO_1000097058" description="Pantothenate synthetase">
    <location>
        <begin position="1"/>
        <end position="283"/>
    </location>
</feature>
<feature type="active site" description="Proton donor" evidence="1">
    <location>
        <position position="33"/>
    </location>
</feature>
<feature type="binding site" evidence="1">
    <location>
        <begin position="26"/>
        <end position="33"/>
    </location>
    <ligand>
        <name>ATP</name>
        <dbReference type="ChEBI" id="CHEBI:30616"/>
    </ligand>
</feature>
<feature type="binding site" evidence="1">
    <location>
        <position position="57"/>
    </location>
    <ligand>
        <name>(R)-pantoate</name>
        <dbReference type="ChEBI" id="CHEBI:15980"/>
    </ligand>
</feature>
<feature type="binding site" evidence="1">
    <location>
        <position position="57"/>
    </location>
    <ligand>
        <name>beta-alanine</name>
        <dbReference type="ChEBI" id="CHEBI:57966"/>
    </ligand>
</feature>
<feature type="binding site" evidence="1">
    <location>
        <begin position="148"/>
        <end position="151"/>
    </location>
    <ligand>
        <name>ATP</name>
        <dbReference type="ChEBI" id="CHEBI:30616"/>
    </ligand>
</feature>
<feature type="binding site" evidence="1">
    <location>
        <position position="154"/>
    </location>
    <ligand>
        <name>(R)-pantoate</name>
        <dbReference type="ChEBI" id="CHEBI:15980"/>
    </ligand>
</feature>
<feature type="binding site" evidence="1">
    <location>
        <position position="177"/>
    </location>
    <ligand>
        <name>ATP</name>
        <dbReference type="ChEBI" id="CHEBI:30616"/>
    </ligand>
</feature>
<feature type="binding site" evidence="1">
    <location>
        <begin position="185"/>
        <end position="188"/>
    </location>
    <ligand>
        <name>ATP</name>
        <dbReference type="ChEBI" id="CHEBI:30616"/>
    </ligand>
</feature>
<gene>
    <name evidence="1" type="primary">panC</name>
    <name type="ordered locus">Daci_1821</name>
</gene>
<proteinExistence type="inferred from homology"/>
<reference key="1">
    <citation type="submission" date="2007-11" db="EMBL/GenBank/DDBJ databases">
        <title>Complete sequence of Delftia acidovorans DSM 14801 / SPH-1.</title>
        <authorList>
            <person name="Copeland A."/>
            <person name="Lucas S."/>
            <person name="Lapidus A."/>
            <person name="Barry K."/>
            <person name="Glavina del Rio T."/>
            <person name="Dalin E."/>
            <person name="Tice H."/>
            <person name="Pitluck S."/>
            <person name="Lowry S."/>
            <person name="Clum A."/>
            <person name="Schmutz J."/>
            <person name="Larimer F."/>
            <person name="Land M."/>
            <person name="Hauser L."/>
            <person name="Kyrpides N."/>
            <person name="Kim E."/>
            <person name="Schleheck D."/>
            <person name="Richardson P."/>
        </authorList>
    </citation>
    <scope>NUCLEOTIDE SEQUENCE [LARGE SCALE GENOMIC DNA]</scope>
    <source>
        <strain>DSM 14801 / SPH-1</strain>
    </source>
</reference>